<evidence type="ECO:0000255" key="1">
    <source>
        <dbReference type="PROSITE-ProRule" id="PRU00864"/>
    </source>
</evidence>
<evidence type="ECO:0000269" key="2">
    <source>
    </source>
</evidence>
<evidence type="ECO:0000305" key="3"/>
<reference key="1">
    <citation type="journal article" date="2002" name="Nature">
        <title>The genome sequence of Schizosaccharomyces pombe.</title>
        <authorList>
            <person name="Wood V."/>
            <person name="Gwilliam R."/>
            <person name="Rajandream M.A."/>
            <person name="Lyne M.H."/>
            <person name="Lyne R."/>
            <person name="Stewart A."/>
            <person name="Sgouros J.G."/>
            <person name="Peat N."/>
            <person name="Hayles J."/>
            <person name="Baker S.G."/>
            <person name="Basham D."/>
            <person name="Bowman S."/>
            <person name="Brooks K."/>
            <person name="Brown D."/>
            <person name="Brown S."/>
            <person name="Chillingworth T."/>
            <person name="Churcher C.M."/>
            <person name="Collins M."/>
            <person name="Connor R."/>
            <person name="Cronin A."/>
            <person name="Davis P."/>
            <person name="Feltwell T."/>
            <person name="Fraser A."/>
            <person name="Gentles S."/>
            <person name="Goble A."/>
            <person name="Hamlin N."/>
            <person name="Harris D.E."/>
            <person name="Hidalgo J."/>
            <person name="Hodgson G."/>
            <person name="Holroyd S."/>
            <person name="Hornsby T."/>
            <person name="Howarth S."/>
            <person name="Huckle E.J."/>
            <person name="Hunt S."/>
            <person name="Jagels K."/>
            <person name="James K.D."/>
            <person name="Jones L."/>
            <person name="Jones M."/>
            <person name="Leather S."/>
            <person name="McDonald S."/>
            <person name="McLean J."/>
            <person name="Mooney P."/>
            <person name="Moule S."/>
            <person name="Mungall K.L."/>
            <person name="Murphy L.D."/>
            <person name="Niblett D."/>
            <person name="Odell C."/>
            <person name="Oliver K."/>
            <person name="O'Neil S."/>
            <person name="Pearson D."/>
            <person name="Quail M.A."/>
            <person name="Rabbinowitsch E."/>
            <person name="Rutherford K.M."/>
            <person name="Rutter S."/>
            <person name="Saunders D."/>
            <person name="Seeger K."/>
            <person name="Sharp S."/>
            <person name="Skelton J."/>
            <person name="Simmonds M.N."/>
            <person name="Squares R."/>
            <person name="Squares S."/>
            <person name="Stevens K."/>
            <person name="Taylor K."/>
            <person name="Taylor R.G."/>
            <person name="Tivey A."/>
            <person name="Walsh S.V."/>
            <person name="Warren T."/>
            <person name="Whitehead S."/>
            <person name="Woodward J.R."/>
            <person name="Volckaert G."/>
            <person name="Aert R."/>
            <person name="Robben J."/>
            <person name="Grymonprez B."/>
            <person name="Weltjens I."/>
            <person name="Vanstreels E."/>
            <person name="Rieger M."/>
            <person name="Schaefer M."/>
            <person name="Mueller-Auer S."/>
            <person name="Gabel C."/>
            <person name="Fuchs M."/>
            <person name="Duesterhoeft A."/>
            <person name="Fritzc C."/>
            <person name="Holzer E."/>
            <person name="Moestl D."/>
            <person name="Hilbert H."/>
            <person name="Borzym K."/>
            <person name="Langer I."/>
            <person name="Beck A."/>
            <person name="Lehrach H."/>
            <person name="Reinhardt R."/>
            <person name="Pohl T.M."/>
            <person name="Eger P."/>
            <person name="Zimmermann W."/>
            <person name="Wedler H."/>
            <person name="Wambutt R."/>
            <person name="Purnelle B."/>
            <person name="Goffeau A."/>
            <person name="Cadieu E."/>
            <person name="Dreano S."/>
            <person name="Gloux S."/>
            <person name="Lelaure V."/>
            <person name="Mottier S."/>
            <person name="Galibert F."/>
            <person name="Aves S.J."/>
            <person name="Xiang Z."/>
            <person name="Hunt C."/>
            <person name="Moore K."/>
            <person name="Hurst S.M."/>
            <person name="Lucas M."/>
            <person name="Rochet M."/>
            <person name="Gaillardin C."/>
            <person name="Tallada V.A."/>
            <person name="Garzon A."/>
            <person name="Thode G."/>
            <person name="Daga R.R."/>
            <person name="Cruzado L."/>
            <person name="Jimenez J."/>
            <person name="Sanchez M."/>
            <person name="del Rey F."/>
            <person name="Benito J."/>
            <person name="Dominguez A."/>
            <person name="Revuelta J.L."/>
            <person name="Moreno S."/>
            <person name="Armstrong J."/>
            <person name="Forsburg S.L."/>
            <person name="Cerutti L."/>
            <person name="Lowe T."/>
            <person name="McCombie W.R."/>
            <person name="Paulsen I."/>
            <person name="Potashkin J."/>
            <person name="Shpakovski G.V."/>
            <person name="Ussery D."/>
            <person name="Barrell B.G."/>
            <person name="Nurse P."/>
        </authorList>
    </citation>
    <scope>NUCLEOTIDE SEQUENCE [LARGE SCALE GENOMIC DNA]</scope>
    <source>
        <strain>972 / ATCC 24843</strain>
    </source>
</reference>
<reference key="2">
    <citation type="journal article" date="2006" name="Nat. Biotechnol.">
        <title>ORFeome cloning and global analysis of protein localization in the fission yeast Schizosaccharomyces pombe.</title>
        <authorList>
            <person name="Matsuyama A."/>
            <person name="Arai R."/>
            <person name="Yashiroda Y."/>
            <person name="Shirai A."/>
            <person name="Kamata A."/>
            <person name="Sekido S."/>
            <person name="Kobayashi Y."/>
            <person name="Hashimoto A."/>
            <person name="Hamamoto M."/>
            <person name="Hiraoka Y."/>
            <person name="Horinouchi S."/>
            <person name="Yoshida M."/>
        </authorList>
    </citation>
    <scope>SUBCELLULAR LOCATION [LARGE SCALE ANALYSIS]</scope>
</reference>
<keyword id="KW-0963">Cytoplasm</keyword>
<keyword id="KW-0539">Nucleus</keyword>
<keyword id="KW-1185">Reference proteome</keyword>
<feature type="chain" id="PRO_0000339879" description="PITH domain-containing protein P35G2.02">
    <location>
        <begin position="1"/>
        <end position="207"/>
    </location>
</feature>
<feature type="domain" description="PITH" evidence="1">
    <location>
        <begin position="13"/>
        <end position="189"/>
    </location>
</feature>
<name>PITH1_SCHPO</name>
<organism>
    <name type="scientific">Schizosaccharomyces pombe (strain 972 / ATCC 24843)</name>
    <name type="common">Fission yeast</name>
    <dbReference type="NCBI Taxonomy" id="284812"/>
    <lineage>
        <taxon>Eukaryota</taxon>
        <taxon>Fungi</taxon>
        <taxon>Dikarya</taxon>
        <taxon>Ascomycota</taxon>
        <taxon>Taphrinomycotina</taxon>
        <taxon>Schizosaccharomycetes</taxon>
        <taxon>Schizosaccharomycetales</taxon>
        <taxon>Schizosaccharomycetaceae</taxon>
        <taxon>Schizosaccharomyces</taxon>
    </lineage>
</organism>
<comment type="subcellular location">
    <subcellularLocation>
        <location evidence="2">Cytoplasm</location>
    </subcellularLocation>
    <subcellularLocation>
        <location evidence="2">Nucleus</location>
    </subcellularLocation>
</comment>
<comment type="similarity">
    <text evidence="3">Belongs to the PITHD1 family.</text>
</comment>
<proteinExistence type="inferred from homology"/>
<sequence>MSGPHHCSADCDEHPFESGPNDTLYSCIRKESIVTLNEAVPDSGKLVFKPWDLRYDDTDIVESDADDQLLFQVPFAGAATLKSILVRIFPNETAPHSFSLFPNRTDLDFDTIGDVQATETFEFPLTFEGSHIFEFPVKTRLYQNLQNLNIFFTKSDGSDDPTQIAYIGLRGSFVPFKGDPVVTIYEATPRPSDHPKVNQEEVFRSYY</sequence>
<protein>
    <recommendedName>
        <fullName>PITH domain-containing protein P35G2.02</fullName>
    </recommendedName>
</protein>
<dbReference type="EMBL" id="CU329671">
    <property type="protein sequence ID" value="CAB87364.1"/>
    <property type="molecule type" value="Genomic_DNA"/>
</dbReference>
<dbReference type="RefSeq" id="NP_595377.1">
    <property type="nucleotide sequence ID" value="NM_001021284.2"/>
</dbReference>
<dbReference type="SMR" id="Q9P7A1"/>
<dbReference type="BioGRID" id="277826">
    <property type="interactions" value="9"/>
</dbReference>
<dbReference type="FunCoup" id="Q9P7A1">
    <property type="interactions" value="697"/>
</dbReference>
<dbReference type="STRING" id="284812.Q9P7A1"/>
<dbReference type="iPTMnet" id="Q9P7A1"/>
<dbReference type="SwissPalm" id="Q9P7A1"/>
<dbReference type="PaxDb" id="4896-SPBP35G2.02.1"/>
<dbReference type="EnsemblFungi" id="SPBP35G2.02.1">
    <property type="protein sequence ID" value="SPBP35G2.02.1:pep"/>
    <property type="gene ID" value="SPBP35G2.02"/>
</dbReference>
<dbReference type="PomBase" id="SPBP35G2.02"/>
<dbReference type="VEuPathDB" id="FungiDB:SPBP35G2.02"/>
<dbReference type="eggNOG" id="KOG1730">
    <property type="taxonomic scope" value="Eukaryota"/>
</dbReference>
<dbReference type="HOGENOM" id="CLU_072377_2_0_1"/>
<dbReference type="InParanoid" id="Q9P7A1"/>
<dbReference type="OMA" id="RLVFKPW"/>
<dbReference type="PhylomeDB" id="Q9P7A1"/>
<dbReference type="PRO" id="PR:Q9P7A1"/>
<dbReference type="Proteomes" id="UP000002485">
    <property type="component" value="Chromosome II"/>
</dbReference>
<dbReference type="GO" id="GO:0005737">
    <property type="term" value="C:cytoplasm"/>
    <property type="evidence" value="ECO:0000314"/>
    <property type="project" value="PomBase"/>
</dbReference>
<dbReference type="GO" id="GO:0005829">
    <property type="term" value="C:cytosol"/>
    <property type="evidence" value="ECO:0007005"/>
    <property type="project" value="PomBase"/>
</dbReference>
<dbReference type="GO" id="GO:0005634">
    <property type="term" value="C:nucleus"/>
    <property type="evidence" value="ECO:0000314"/>
    <property type="project" value="PomBase"/>
</dbReference>
<dbReference type="Gene3D" id="2.60.120.470">
    <property type="entry name" value="PITH domain"/>
    <property type="match status" value="1"/>
</dbReference>
<dbReference type="InterPro" id="IPR008979">
    <property type="entry name" value="Galactose-bd-like_sf"/>
</dbReference>
<dbReference type="InterPro" id="IPR045099">
    <property type="entry name" value="PITH1-like"/>
</dbReference>
<dbReference type="InterPro" id="IPR010400">
    <property type="entry name" value="PITH_dom"/>
</dbReference>
<dbReference type="InterPro" id="IPR037047">
    <property type="entry name" value="PITH_dom_sf"/>
</dbReference>
<dbReference type="PANTHER" id="PTHR12175">
    <property type="entry name" value="AD039 HT014 THIOREDOXIN FAMILY TRP26"/>
    <property type="match status" value="1"/>
</dbReference>
<dbReference type="PANTHER" id="PTHR12175:SF1">
    <property type="entry name" value="PITH DOMAIN-CONTAINING PROTEIN 1"/>
    <property type="match status" value="1"/>
</dbReference>
<dbReference type="Pfam" id="PF06201">
    <property type="entry name" value="PITH"/>
    <property type="match status" value="1"/>
</dbReference>
<dbReference type="SUPFAM" id="SSF49785">
    <property type="entry name" value="Galactose-binding domain-like"/>
    <property type="match status" value="1"/>
</dbReference>
<dbReference type="PROSITE" id="PS51532">
    <property type="entry name" value="PITH"/>
    <property type="match status" value="1"/>
</dbReference>
<accession>Q9P7A1</accession>
<gene>
    <name type="ORF">SPBP35G2.02</name>
</gene>